<name>MFME_ANNMO</name>
<accession>P9WEG4</accession>
<gene>
    <name evidence="4" type="primary">mfmE</name>
    <name type="ORF">F4805DRAFT_462788</name>
</gene>
<dbReference type="EC" id="2.1.1.-" evidence="3"/>
<dbReference type="EMBL" id="MU403194">
    <property type="protein sequence ID" value="KAI1452416.1"/>
    <property type="molecule type" value="Genomic_DNA"/>
</dbReference>
<dbReference type="UniPathway" id="UPA00213"/>
<dbReference type="Gene3D" id="3.40.50.150">
    <property type="entry name" value="Vaccinia Virus protein VP39"/>
    <property type="match status" value="1"/>
</dbReference>
<dbReference type="Gene3D" id="1.10.10.10">
    <property type="entry name" value="Winged helix-like DNA-binding domain superfamily/Winged helix DNA-binding domain"/>
    <property type="match status" value="1"/>
</dbReference>
<dbReference type="InterPro" id="IPR016461">
    <property type="entry name" value="COMT-like"/>
</dbReference>
<dbReference type="InterPro" id="IPR001077">
    <property type="entry name" value="O_MeTrfase_dom"/>
</dbReference>
<dbReference type="InterPro" id="IPR012967">
    <property type="entry name" value="Plant_O-MeTrfase_dimerisation"/>
</dbReference>
<dbReference type="InterPro" id="IPR029063">
    <property type="entry name" value="SAM-dependent_MTases_sf"/>
</dbReference>
<dbReference type="InterPro" id="IPR036388">
    <property type="entry name" value="WH-like_DNA-bd_sf"/>
</dbReference>
<dbReference type="InterPro" id="IPR036390">
    <property type="entry name" value="WH_DNA-bd_sf"/>
</dbReference>
<dbReference type="PANTHER" id="PTHR43712:SF17">
    <property type="entry name" value="O-METHYLTRANSFERASE"/>
    <property type="match status" value="1"/>
</dbReference>
<dbReference type="PANTHER" id="PTHR43712">
    <property type="entry name" value="PUTATIVE (AFU_ORTHOLOGUE AFUA_4G14580)-RELATED"/>
    <property type="match status" value="1"/>
</dbReference>
<dbReference type="Pfam" id="PF08100">
    <property type="entry name" value="Dimerisation"/>
    <property type="match status" value="1"/>
</dbReference>
<dbReference type="Pfam" id="PF00891">
    <property type="entry name" value="Methyltransf_2"/>
    <property type="match status" value="1"/>
</dbReference>
<dbReference type="SUPFAM" id="SSF53335">
    <property type="entry name" value="S-adenosyl-L-methionine-dependent methyltransferases"/>
    <property type="match status" value="1"/>
</dbReference>
<dbReference type="SUPFAM" id="SSF46785">
    <property type="entry name" value="Winged helix' DNA-binding domain"/>
    <property type="match status" value="1"/>
</dbReference>
<dbReference type="PROSITE" id="PS51683">
    <property type="entry name" value="SAM_OMT_II"/>
    <property type="match status" value="1"/>
</dbReference>
<feature type="chain" id="PRO_0000461993" description="O-methyltransferase mfmE">
    <location>
        <begin position="1"/>
        <end position="401"/>
    </location>
</feature>
<feature type="active site" description="Proton acceptor" evidence="2">
    <location>
        <position position="308"/>
    </location>
</feature>
<feature type="binding site" evidence="1">
    <location>
        <begin position="243"/>
        <end position="244"/>
    </location>
    <ligand>
        <name>S-adenosyl-L-methionine</name>
        <dbReference type="ChEBI" id="CHEBI:59789"/>
    </ligand>
</feature>
<feature type="binding site" evidence="2">
    <location>
        <position position="268"/>
    </location>
    <ligand>
        <name>S-adenosyl-L-methionine</name>
        <dbReference type="ChEBI" id="CHEBI:59789"/>
    </ligand>
</feature>
<keyword id="KW-0489">Methyltransferase</keyword>
<keyword id="KW-0949">S-adenosyl-L-methionine</keyword>
<keyword id="KW-0808">Transferase</keyword>
<sequence length="401" mass="44792">MASTTNGVNGHKASQPQSLIQTLNNIGADSFSNDGERIQAVLAAYALVSRLETPWEFVARTCMGQPALGAALKVAKDLKLYDKWHELGDGEMTCEQLSELVSCDSALLFRILRHLAANHVLEETSIGVFKPTKLSISFTVPVFGEWINHLYDATTPCFFKMPEFLAQNGYKNPVDPNNGVFQAAKGWKGDMFDYYKSHPVEGASFDHVMGGVMANQAGWLEIFPHNKLLETADAQSPLVVDVGGNIGHDIERFRQEHPETASRLYLEDLPEVVKRSKCPDDVNKVGYDFFTPQPIKGARAYYMHGVLHDWSEEPARKILEMQKEAMKPGYSTLLIHDHIAPESLAHPHTTAYDLTMMVMVAGVERREAHWRALLKSAGYKLVRIWRSPLAVQGVIEAELDQ</sequence>
<organism>
    <name type="scientific">Annulohypoxylon moriforme</name>
    <name type="common">Filamentous fungus</name>
    <name type="synonym">Hypoxylon moriforme</name>
    <dbReference type="NCBI Taxonomy" id="326622"/>
    <lineage>
        <taxon>Eukaryota</taxon>
        <taxon>Fungi</taxon>
        <taxon>Dikarya</taxon>
        <taxon>Ascomycota</taxon>
        <taxon>Pezizomycotina</taxon>
        <taxon>Sordariomycetes</taxon>
        <taxon>Xylariomycetidae</taxon>
        <taxon>Xylariales</taxon>
        <taxon>Hypoxylaceae</taxon>
        <taxon>Annulohypoxylon</taxon>
    </lineage>
</organism>
<comment type="function">
    <text evidence="3">O-methyltransferase; part of the gene cluster that mediates the biosynthesis of the phthalide-terpenoid hybrid 11'-O-desmethylfendlerol (PubMed:38404388). Within the pathway, mfmE catalyzes the 7-O-methylation of the phthalide 5,7-dihydroxy-4-(hydroxymethyl)-6-methylphthalide to yield 5-hydroxy-4-(hydroxymethyl)-7-methoxy-6-methylphthalide (PubMed:38404388). The biosynthesis of 11'-O-desmethylfendlerol begins with the NR-PKS mfmB that forms 3,5-dimethylorsellinic acid (DMOA), which is then transformed into the phthalide 5,7-dihydroxy-4-(hydroxymethyl)-6-methylphthalide by the cytochrome P450 monooxygenase mfmA and the hydrolase mfmC. Subsequently, the methyltransferase mfmE catalyzes 7-O-methylation to yield 5-hydroxy-4-(hydroxymethyl)-7-methoxy-6-methylphthalide, which undergoes C-3 hydroxylation by the cytochrome P450 monooxygenase mfmF. The resultant cyclopolic acid (2,5-dihydroxy-4-(hydroxymethyl)-7-methoxy-6-methylphthalide) is then farnesylated by the DMATS-type prenyltransferase mfmD to afford 5-O-farnesylcyclopolic acid. Finally, the Pyr4-family terpene cyclase mfmH cyclizes the farnesyl moiety of 5-O-farnesylcyclopolic acid into a drimane-like structure, thus completing the biosynthesis of 11'-O-desmethylfendlerol (PubMed:38404388).</text>
</comment>
<comment type="pathway">
    <text evidence="3">Secondary metabolite biosynthesis; terpenoid biosynthesis.</text>
</comment>
<comment type="similarity">
    <text evidence="5">Belongs to the class I-like SAM-binding methyltransferase superfamily. Cation-independent O-methyltransferase family. COMT subfamily.</text>
</comment>
<evidence type="ECO:0000250" key="1">
    <source>
        <dbReference type="UniProtKB" id="O04385"/>
    </source>
</evidence>
<evidence type="ECO:0000255" key="2">
    <source>
        <dbReference type="PROSITE-ProRule" id="PRU01020"/>
    </source>
</evidence>
<evidence type="ECO:0000269" key="3">
    <source>
    </source>
</evidence>
<evidence type="ECO:0000303" key="4">
    <source>
    </source>
</evidence>
<evidence type="ECO:0000305" key="5"/>
<proteinExistence type="evidence at protein level"/>
<reference key="1">
    <citation type="journal article" date="2022" name="New Phytol.">
        <title>Ecological generalism drives hyperdiversity of secondary metabolite gene clusters in xylarialean endophytes.</title>
        <authorList>
            <person name="Franco M.E.E."/>
            <person name="Wisecaver J.H."/>
            <person name="Arnold A.E."/>
            <person name="Ju Y.M."/>
            <person name="Slot J.C."/>
            <person name="Ahrendt S."/>
            <person name="Moore L.P."/>
            <person name="Eastman K.E."/>
            <person name="Scott K."/>
            <person name="Konkel Z."/>
            <person name="Mondo S.J."/>
            <person name="Kuo A."/>
            <person name="Hayes R.D."/>
            <person name="Haridas S."/>
            <person name="Andreopoulos B."/>
            <person name="Riley R."/>
            <person name="LaButti K."/>
            <person name="Pangilinan J."/>
            <person name="Lipzen A."/>
            <person name="Amirebrahimi M."/>
            <person name="Yan J."/>
            <person name="Adam C."/>
            <person name="Keymanesh K."/>
            <person name="Ng V."/>
            <person name="Louie K."/>
            <person name="Northen T."/>
            <person name="Drula E."/>
            <person name="Henrissat B."/>
            <person name="Hsieh H.M."/>
            <person name="Youens-Clark K."/>
            <person name="Lutzoni F."/>
            <person name="Miadlikowska J."/>
            <person name="Eastwood D.C."/>
            <person name="Hamelin R.C."/>
            <person name="Grigoriev I.V."/>
            <person name="U'Ren J.M."/>
        </authorList>
    </citation>
    <scope>NUCLEOTIDE SEQUENCE [GENOMIC DNA]</scope>
    <source>
        <strain>CBS 123579</strain>
    </source>
</reference>
<reference key="2">
    <citation type="journal article" date="2024" name="Chem. Sci.">
        <title>Global genome mining-driven discovery of an unusual biosynthetic logic for fungal polyketide-terpenoid hybrids.</title>
        <authorList>
            <person name="Yan D."/>
            <person name="Matsuda Y."/>
        </authorList>
    </citation>
    <scope>FUNCTION</scope>
    <scope>CATALYTIC ACTIVITY</scope>
    <scope>PATHWAY</scope>
    <source>
        <strain>CBS 123579</strain>
    </source>
</reference>
<protein>
    <recommendedName>
        <fullName evidence="4">O-methyltransferase mfmE</fullName>
        <ecNumber evidence="3">2.1.1.-</ecNumber>
    </recommendedName>
    <alternativeName>
        <fullName evidence="4">11'-O-desmethylfendlerol biosynthesis cluster protein E</fullName>
    </alternativeName>
</protein>